<feature type="chain" id="PRO_1000071616" description="5-methyltetrahydropteroyltriglutamate--homocysteine methyltransferase">
    <location>
        <begin position="1"/>
        <end position="742"/>
    </location>
</feature>
<feature type="active site" description="Proton donor" evidence="1">
    <location>
        <position position="683"/>
    </location>
</feature>
<feature type="binding site" evidence="1">
    <location>
        <begin position="18"/>
        <end position="21"/>
    </location>
    <ligand>
        <name>5-methyltetrahydropteroyltri-L-glutamate</name>
        <dbReference type="ChEBI" id="CHEBI:58207"/>
    </ligand>
</feature>
<feature type="binding site" evidence="1">
    <location>
        <position position="112"/>
    </location>
    <ligand>
        <name>5-methyltetrahydropteroyltri-L-glutamate</name>
        <dbReference type="ChEBI" id="CHEBI:58207"/>
    </ligand>
</feature>
<feature type="binding site" evidence="1">
    <location>
        <begin position="420"/>
        <end position="422"/>
    </location>
    <ligand>
        <name>L-homocysteine</name>
        <dbReference type="ChEBI" id="CHEBI:58199"/>
    </ligand>
</feature>
<feature type="binding site" evidence="1">
    <location>
        <begin position="420"/>
        <end position="422"/>
    </location>
    <ligand>
        <name>L-methionine</name>
        <dbReference type="ChEBI" id="CHEBI:57844"/>
    </ligand>
</feature>
<feature type="binding site" evidence="1">
    <location>
        <position position="473"/>
    </location>
    <ligand>
        <name>L-homocysteine</name>
        <dbReference type="ChEBI" id="CHEBI:58199"/>
    </ligand>
</feature>
<feature type="binding site" evidence="1">
    <location>
        <position position="473"/>
    </location>
    <ligand>
        <name>L-methionine</name>
        <dbReference type="ChEBI" id="CHEBI:57844"/>
    </ligand>
</feature>
<feature type="binding site" evidence="1">
    <location>
        <position position="550"/>
    </location>
    <ligand>
        <name>5-methyltetrahydropteroyltri-L-glutamate</name>
        <dbReference type="ChEBI" id="CHEBI:58207"/>
    </ligand>
</feature>
<feature type="binding site" evidence="1">
    <location>
        <position position="588"/>
    </location>
    <ligand>
        <name>L-homocysteine</name>
        <dbReference type="ChEBI" id="CHEBI:58199"/>
    </ligand>
</feature>
<feature type="binding site" evidence="1">
    <location>
        <position position="588"/>
    </location>
    <ligand>
        <name>L-methionine</name>
        <dbReference type="ChEBI" id="CHEBI:57844"/>
    </ligand>
</feature>
<feature type="binding site" evidence="1">
    <location>
        <position position="594"/>
    </location>
    <ligand>
        <name>5-methyltetrahydropteroyltri-L-glutamate</name>
        <dbReference type="ChEBI" id="CHEBI:58207"/>
    </ligand>
</feature>
<feature type="binding site" evidence="1">
    <location>
        <position position="630"/>
    </location>
    <ligand>
        <name>Zn(2+)</name>
        <dbReference type="ChEBI" id="CHEBI:29105"/>
        <note>catalytic</note>
    </ligand>
</feature>
<feature type="binding site" evidence="1">
    <location>
        <position position="632"/>
    </location>
    <ligand>
        <name>Zn(2+)</name>
        <dbReference type="ChEBI" id="CHEBI:29105"/>
        <note>catalytic</note>
    </ligand>
</feature>
<feature type="binding site" evidence="1">
    <location>
        <position position="654"/>
    </location>
    <ligand>
        <name>Zn(2+)</name>
        <dbReference type="ChEBI" id="CHEBI:29105"/>
        <note>catalytic</note>
    </ligand>
</feature>
<feature type="binding site" evidence="1">
    <location>
        <position position="715"/>
    </location>
    <ligand>
        <name>Zn(2+)</name>
        <dbReference type="ChEBI" id="CHEBI:29105"/>
        <note>catalytic</note>
    </ligand>
</feature>
<dbReference type="EC" id="2.1.1.14" evidence="1"/>
<dbReference type="EMBL" id="AP009351">
    <property type="protein sequence ID" value="BAF66620.1"/>
    <property type="molecule type" value="Genomic_DNA"/>
</dbReference>
<dbReference type="RefSeq" id="WP_000207614.1">
    <property type="nucleotide sequence ID" value="NZ_JBBIAE010000011.1"/>
</dbReference>
<dbReference type="SMR" id="A6QE38"/>
<dbReference type="KEGG" id="sae:NWMN_0348"/>
<dbReference type="HOGENOM" id="CLU_013175_0_0_9"/>
<dbReference type="UniPathway" id="UPA00051">
    <property type="reaction ID" value="UER00082"/>
</dbReference>
<dbReference type="Proteomes" id="UP000006386">
    <property type="component" value="Chromosome"/>
</dbReference>
<dbReference type="GO" id="GO:0003871">
    <property type="term" value="F:5-methyltetrahydropteroyltriglutamate-homocysteine S-methyltransferase activity"/>
    <property type="evidence" value="ECO:0007669"/>
    <property type="project" value="UniProtKB-UniRule"/>
</dbReference>
<dbReference type="GO" id="GO:0008270">
    <property type="term" value="F:zinc ion binding"/>
    <property type="evidence" value="ECO:0007669"/>
    <property type="project" value="InterPro"/>
</dbReference>
<dbReference type="GO" id="GO:0009086">
    <property type="term" value="P:methionine biosynthetic process"/>
    <property type="evidence" value="ECO:0007669"/>
    <property type="project" value="UniProtKB-UniRule"/>
</dbReference>
<dbReference type="GO" id="GO:0032259">
    <property type="term" value="P:methylation"/>
    <property type="evidence" value="ECO:0007669"/>
    <property type="project" value="UniProtKB-KW"/>
</dbReference>
<dbReference type="CDD" id="cd03311">
    <property type="entry name" value="CIMS_C_terminal_like"/>
    <property type="match status" value="1"/>
</dbReference>
<dbReference type="CDD" id="cd03312">
    <property type="entry name" value="CIMS_N_terminal_like"/>
    <property type="match status" value="1"/>
</dbReference>
<dbReference type="Gene3D" id="3.20.20.210">
    <property type="match status" value="2"/>
</dbReference>
<dbReference type="HAMAP" id="MF_00172">
    <property type="entry name" value="Meth_synth"/>
    <property type="match status" value="1"/>
</dbReference>
<dbReference type="InterPro" id="IPR013215">
    <property type="entry name" value="Cbl-indep_Met_Synth_N"/>
</dbReference>
<dbReference type="InterPro" id="IPR006276">
    <property type="entry name" value="Cobalamin-indep_Met_synthase"/>
</dbReference>
<dbReference type="InterPro" id="IPR002629">
    <property type="entry name" value="Met_Synth_C/arc"/>
</dbReference>
<dbReference type="InterPro" id="IPR038071">
    <property type="entry name" value="UROD/MetE-like_sf"/>
</dbReference>
<dbReference type="NCBIfam" id="TIGR01371">
    <property type="entry name" value="met_syn_B12ind"/>
    <property type="match status" value="1"/>
</dbReference>
<dbReference type="NCBIfam" id="NF003556">
    <property type="entry name" value="PRK05222.1"/>
    <property type="match status" value="1"/>
</dbReference>
<dbReference type="PANTHER" id="PTHR30519">
    <property type="entry name" value="5-METHYLTETRAHYDROPTEROYLTRIGLUTAMATE--HOMOCYSTEINE METHYLTRANSFERASE"/>
    <property type="match status" value="1"/>
</dbReference>
<dbReference type="Pfam" id="PF08267">
    <property type="entry name" value="Meth_synt_1"/>
    <property type="match status" value="1"/>
</dbReference>
<dbReference type="Pfam" id="PF01717">
    <property type="entry name" value="Meth_synt_2"/>
    <property type="match status" value="1"/>
</dbReference>
<dbReference type="PIRSF" id="PIRSF000382">
    <property type="entry name" value="MeTrfase_B12_ind"/>
    <property type="match status" value="1"/>
</dbReference>
<dbReference type="SUPFAM" id="SSF51726">
    <property type="entry name" value="UROD/MetE-like"/>
    <property type="match status" value="2"/>
</dbReference>
<accession>A6QE38</accession>
<keyword id="KW-0028">Amino-acid biosynthesis</keyword>
<keyword id="KW-0479">Metal-binding</keyword>
<keyword id="KW-0486">Methionine biosynthesis</keyword>
<keyword id="KW-0489">Methyltransferase</keyword>
<keyword id="KW-0677">Repeat</keyword>
<keyword id="KW-0808">Transferase</keyword>
<keyword id="KW-0862">Zinc</keyword>
<name>METE_STAAE</name>
<evidence type="ECO:0000255" key="1">
    <source>
        <dbReference type="HAMAP-Rule" id="MF_00172"/>
    </source>
</evidence>
<protein>
    <recommendedName>
        <fullName evidence="1">5-methyltetrahydropteroyltriglutamate--homocysteine methyltransferase</fullName>
        <ecNumber evidence="1">2.1.1.14</ecNumber>
    </recommendedName>
    <alternativeName>
        <fullName evidence="1">Cobalamin-independent methionine synthase</fullName>
    </alternativeName>
    <alternativeName>
        <fullName evidence="1">Methionine synthase, vitamin-B12 independent isozyme</fullName>
    </alternativeName>
</protein>
<reference key="1">
    <citation type="journal article" date="2008" name="J. Bacteriol.">
        <title>Genome sequence of Staphylococcus aureus strain Newman and comparative analysis of staphylococcal genomes: polymorphism and evolution of two major pathogenicity islands.</title>
        <authorList>
            <person name="Baba T."/>
            <person name="Bae T."/>
            <person name="Schneewind O."/>
            <person name="Takeuchi F."/>
            <person name="Hiramatsu K."/>
        </authorList>
    </citation>
    <scope>NUCLEOTIDE SEQUENCE [LARGE SCALE GENOMIC DNA]</scope>
    <source>
        <strain>Newman</strain>
    </source>
</reference>
<gene>
    <name evidence="1" type="primary">metE</name>
    <name type="ordered locus">NWMN_0348</name>
</gene>
<sequence length="742" mass="85076">MTTIKTSNLGFPRLGRKREWKKAIESYWAKKISKEELDQTLTDLHKENLLLQKYYHLDSIPVGDFSLYDHILDTSLLFNIIPERFQGRTIDDDLLFDIARGNKDHVASALIKWFNTNYHYIVPEWDNVEPKVSRNVLLDRFKYAQSLNVNAHPVIVGPITFVKLSKGGHQTFEEKVKTLLPLYKEVFESLIDAGAEYIQVDEPILVTDDSESYENITREAYDYFEKAGVAKKLVIQTYFERAHLKFLSSLPVGGIGLDFVHDNGYNLKQIEAGDFDKSKTLYAGIIDGRNVWASDIEAKKVLIDKLLAHTNELVIQPSSSLLHVPVSLDDETLDTSVGEGLSFATEKLDELDALRRLFNQNDSVKYDKLKARYERFQNQSFKNLDYDFESVRTSRQSPFAQRIEQQQKRLNLPDLPTTTIGSFPQSREVRKYRADWKNKRITDEAYETFLKNEIARWIKIQEDIGLDVLVHGEFERNDMVEFFGEKLQGFLVTKFGWVQSYGSRAVKPPIIYGDVKWTAPLTVDETVYAQSLTDKPVKGMLTGPVTILNWSFERVDLPRKVVQDQIALAINEEVLALEAAGIKVIQVDEPALREGLPLRSEYHEQYLKDAVLSFKLATSSVRDETQIHTHMCYSQFGQIIHAIHDLDADVISIETSRSHGDLIKDFEDINYDLGIGLGVYDIHSPRIPTKEEITTAINRSLQQIDRSLFWVNPDCGLKTRKEEEVKDALTVLVNAVKAKRQE</sequence>
<organism>
    <name type="scientific">Staphylococcus aureus (strain Newman)</name>
    <dbReference type="NCBI Taxonomy" id="426430"/>
    <lineage>
        <taxon>Bacteria</taxon>
        <taxon>Bacillati</taxon>
        <taxon>Bacillota</taxon>
        <taxon>Bacilli</taxon>
        <taxon>Bacillales</taxon>
        <taxon>Staphylococcaceae</taxon>
        <taxon>Staphylococcus</taxon>
    </lineage>
</organism>
<proteinExistence type="inferred from homology"/>
<comment type="function">
    <text evidence="1">Catalyzes the transfer of a methyl group from 5-methyltetrahydrofolate to homocysteine resulting in methionine formation.</text>
</comment>
<comment type="catalytic activity">
    <reaction evidence="1">
        <text>5-methyltetrahydropteroyltri-L-glutamate + L-homocysteine = tetrahydropteroyltri-L-glutamate + L-methionine</text>
        <dbReference type="Rhea" id="RHEA:21196"/>
        <dbReference type="ChEBI" id="CHEBI:57844"/>
        <dbReference type="ChEBI" id="CHEBI:58140"/>
        <dbReference type="ChEBI" id="CHEBI:58199"/>
        <dbReference type="ChEBI" id="CHEBI:58207"/>
        <dbReference type="EC" id="2.1.1.14"/>
    </reaction>
</comment>
<comment type="cofactor">
    <cofactor evidence="1">
        <name>Zn(2+)</name>
        <dbReference type="ChEBI" id="CHEBI:29105"/>
    </cofactor>
    <text evidence="1">Binds 1 zinc ion per subunit.</text>
</comment>
<comment type="pathway">
    <text evidence="1">Amino-acid biosynthesis; L-methionine biosynthesis via de novo pathway; L-methionine from L-homocysteine (MetE route): step 1/1.</text>
</comment>
<comment type="similarity">
    <text evidence="1">Belongs to the vitamin-B12 independent methionine synthase family.</text>
</comment>